<proteinExistence type="inferred from homology"/>
<keyword id="KW-0963">Cytoplasm</keyword>
<keyword id="KW-0489">Methyltransferase</keyword>
<keyword id="KW-1185">Reference proteome</keyword>
<keyword id="KW-0949">S-adenosyl-L-methionine</keyword>
<keyword id="KW-0808">Transferase</keyword>
<protein>
    <recommendedName>
        <fullName evidence="1">Protein-L-isoaspartate O-methyltransferase</fullName>
        <ecNumber evidence="1">2.1.1.77</ecNumber>
    </recommendedName>
    <alternativeName>
        <fullName evidence="1">L-isoaspartyl protein carboxyl methyltransferase</fullName>
    </alternativeName>
    <alternativeName>
        <fullName evidence="1">Protein L-isoaspartyl methyltransferase</fullName>
    </alternativeName>
    <alternativeName>
        <fullName evidence="1">Protein-beta-aspartate methyltransferase</fullName>
        <shortName evidence="1">PIMT</shortName>
    </alternativeName>
</protein>
<comment type="function">
    <text evidence="1">Catalyzes the methyl esterification of L-isoaspartyl residues in peptides and proteins that result from spontaneous decomposition of normal L-aspartyl and L-asparaginyl residues. It plays a role in the repair and/or degradation of damaged proteins.</text>
</comment>
<comment type="catalytic activity">
    <reaction evidence="1">
        <text>[protein]-L-isoaspartate + S-adenosyl-L-methionine = [protein]-L-isoaspartate alpha-methyl ester + S-adenosyl-L-homocysteine</text>
        <dbReference type="Rhea" id="RHEA:12705"/>
        <dbReference type="Rhea" id="RHEA-COMP:12143"/>
        <dbReference type="Rhea" id="RHEA-COMP:12144"/>
        <dbReference type="ChEBI" id="CHEBI:57856"/>
        <dbReference type="ChEBI" id="CHEBI:59789"/>
        <dbReference type="ChEBI" id="CHEBI:90596"/>
        <dbReference type="ChEBI" id="CHEBI:90598"/>
        <dbReference type="EC" id="2.1.1.77"/>
    </reaction>
</comment>
<comment type="subcellular location">
    <subcellularLocation>
        <location evidence="1">Cytoplasm</location>
    </subcellularLocation>
</comment>
<comment type="similarity">
    <text evidence="1">Belongs to the methyltransferase superfamily. L-isoaspartyl/D-aspartyl protein methyltransferase family.</text>
</comment>
<dbReference type="EC" id="2.1.1.77" evidence="1"/>
<dbReference type="EMBL" id="FM180568">
    <property type="protein sequence ID" value="CAS10561.1"/>
    <property type="molecule type" value="Genomic_DNA"/>
</dbReference>
<dbReference type="RefSeq" id="WP_000254708.1">
    <property type="nucleotide sequence ID" value="NC_011601.1"/>
</dbReference>
<dbReference type="SMR" id="B7UHG2"/>
<dbReference type="GeneID" id="93779263"/>
<dbReference type="KEGG" id="ecg:E2348C_3013"/>
<dbReference type="HOGENOM" id="CLU_055432_2_0_6"/>
<dbReference type="Proteomes" id="UP000008205">
    <property type="component" value="Chromosome"/>
</dbReference>
<dbReference type="GO" id="GO:0005737">
    <property type="term" value="C:cytoplasm"/>
    <property type="evidence" value="ECO:0007669"/>
    <property type="project" value="UniProtKB-SubCell"/>
</dbReference>
<dbReference type="GO" id="GO:0004719">
    <property type="term" value="F:protein-L-isoaspartate (D-aspartate) O-methyltransferase activity"/>
    <property type="evidence" value="ECO:0007669"/>
    <property type="project" value="UniProtKB-UniRule"/>
</dbReference>
<dbReference type="GO" id="GO:0032259">
    <property type="term" value="P:methylation"/>
    <property type="evidence" value="ECO:0007669"/>
    <property type="project" value="UniProtKB-KW"/>
</dbReference>
<dbReference type="GO" id="GO:0036211">
    <property type="term" value="P:protein modification process"/>
    <property type="evidence" value="ECO:0007669"/>
    <property type="project" value="UniProtKB-UniRule"/>
</dbReference>
<dbReference type="GO" id="GO:0030091">
    <property type="term" value="P:protein repair"/>
    <property type="evidence" value="ECO:0007669"/>
    <property type="project" value="UniProtKB-UniRule"/>
</dbReference>
<dbReference type="CDD" id="cd02440">
    <property type="entry name" value="AdoMet_MTases"/>
    <property type="match status" value="1"/>
</dbReference>
<dbReference type="FunFam" id="3.40.50.150:FF:000010">
    <property type="entry name" value="Protein-L-isoaspartate O-methyltransferase"/>
    <property type="match status" value="1"/>
</dbReference>
<dbReference type="Gene3D" id="3.40.50.150">
    <property type="entry name" value="Vaccinia Virus protein VP39"/>
    <property type="match status" value="1"/>
</dbReference>
<dbReference type="HAMAP" id="MF_00090">
    <property type="entry name" value="PIMT"/>
    <property type="match status" value="1"/>
</dbReference>
<dbReference type="InterPro" id="IPR000682">
    <property type="entry name" value="PCMT"/>
</dbReference>
<dbReference type="InterPro" id="IPR029063">
    <property type="entry name" value="SAM-dependent_MTases_sf"/>
</dbReference>
<dbReference type="NCBIfam" id="TIGR00080">
    <property type="entry name" value="pimt"/>
    <property type="match status" value="1"/>
</dbReference>
<dbReference type="NCBIfam" id="NF001453">
    <property type="entry name" value="PRK00312.1"/>
    <property type="match status" value="1"/>
</dbReference>
<dbReference type="PANTHER" id="PTHR11579">
    <property type="entry name" value="PROTEIN-L-ISOASPARTATE O-METHYLTRANSFERASE"/>
    <property type="match status" value="1"/>
</dbReference>
<dbReference type="PANTHER" id="PTHR11579:SF0">
    <property type="entry name" value="PROTEIN-L-ISOASPARTATE(D-ASPARTATE) O-METHYLTRANSFERASE"/>
    <property type="match status" value="1"/>
</dbReference>
<dbReference type="Pfam" id="PF01135">
    <property type="entry name" value="PCMT"/>
    <property type="match status" value="1"/>
</dbReference>
<dbReference type="SUPFAM" id="SSF53335">
    <property type="entry name" value="S-adenosyl-L-methionine-dependent methyltransferases"/>
    <property type="match status" value="1"/>
</dbReference>
<dbReference type="PROSITE" id="PS01279">
    <property type="entry name" value="PCMT"/>
    <property type="match status" value="1"/>
</dbReference>
<accession>B7UHG2</accession>
<sequence length="208" mass="23258">MVSRRVQALLDQLRAQGIQDEQVLNALAAVPREKFVDEAFEQKAWDNIALPIGQGQTISQPYMVARMTELLELTPQSRVLEIGTGSGYQTAILAHLVQHVCSVERIKGLQWQARRRLKNLDLHNVSTRHGDGWQGWQARAPFDAIIVTAAPPEIPTALMTQLDEGGILVLPVGEEHQYLKRVRRRGGEFIIDTVEAVRFVPLVKGELA</sequence>
<name>PIMT_ECO27</name>
<reference key="1">
    <citation type="journal article" date="2009" name="J. Bacteriol.">
        <title>Complete genome sequence and comparative genome analysis of enteropathogenic Escherichia coli O127:H6 strain E2348/69.</title>
        <authorList>
            <person name="Iguchi A."/>
            <person name="Thomson N.R."/>
            <person name="Ogura Y."/>
            <person name="Saunders D."/>
            <person name="Ooka T."/>
            <person name="Henderson I.R."/>
            <person name="Harris D."/>
            <person name="Asadulghani M."/>
            <person name="Kurokawa K."/>
            <person name="Dean P."/>
            <person name="Kenny B."/>
            <person name="Quail M.A."/>
            <person name="Thurston S."/>
            <person name="Dougan G."/>
            <person name="Hayashi T."/>
            <person name="Parkhill J."/>
            <person name="Frankel G."/>
        </authorList>
    </citation>
    <scope>NUCLEOTIDE SEQUENCE [LARGE SCALE GENOMIC DNA]</scope>
    <source>
        <strain>E2348/69 / EPEC</strain>
    </source>
</reference>
<organism>
    <name type="scientific">Escherichia coli O127:H6 (strain E2348/69 / EPEC)</name>
    <dbReference type="NCBI Taxonomy" id="574521"/>
    <lineage>
        <taxon>Bacteria</taxon>
        <taxon>Pseudomonadati</taxon>
        <taxon>Pseudomonadota</taxon>
        <taxon>Gammaproteobacteria</taxon>
        <taxon>Enterobacterales</taxon>
        <taxon>Enterobacteriaceae</taxon>
        <taxon>Escherichia</taxon>
    </lineage>
</organism>
<gene>
    <name evidence="1" type="primary">pcm</name>
    <name type="ordered locus">E2348C_3013</name>
</gene>
<evidence type="ECO:0000255" key="1">
    <source>
        <dbReference type="HAMAP-Rule" id="MF_00090"/>
    </source>
</evidence>
<feature type="chain" id="PRO_1000192391" description="Protein-L-isoaspartate O-methyltransferase">
    <location>
        <begin position="1"/>
        <end position="208"/>
    </location>
</feature>
<feature type="active site" evidence="1">
    <location>
        <position position="59"/>
    </location>
</feature>